<feature type="chain" id="PRO_1000190132" description="Glycerol-3-phosphate dehydrogenase [NAD(P)+]">
    <location>
        <begin position="1"/>
        <end position="332"/>
    </location>
</feature>
<feature type="active site" description="Proton acceptor" evidence="1">
    <location>
        <position position="192"/>
    </location>
</feature>
<feature type="binding site" evidence="1">
    <location>
        <position position="15"/>
    </location>
    <ligand>
        <name>NADPH</name>
        <dbReference type="ChEBI" id="CHEBI:57783"/>
    </ligand>
</feature>
<feature type="binding site" evidence="1">
    <location>
        <position position="16"/>
    </location>
    <ligand>
        <name>NADPH</name>
        <dbReference type="ChEBI" id="CHEBI:57783"/>
    </ligand>
</feature>
<feature type="binding site" evidence="1">
    <location>
        <position position="110"/>
    </location>
    <ligand>
        <name>NADPH</name>
        <dbReference type="ChEBI" id="CHEBI:57783"/>
    </ligand>
</feature>
<feature type="binding site" evidence="1">
    <location>
        <position position="110"/>
    </location>
    <ligand>
        <name>sn-glycerol 3-phosphate</name>
        <dbReference type="ChEBI" id="CHEBI:57597"/>
    </ligand>
</feature>
<feature type="binding site" evidence="1">
    <location>
        <position position="137"/>
    </location>
    <ligand>
        <name>sn-glycerol 3-phosphate</name>
        <dbReference type="ChEBI" id="CHEBI:57597"/>
    </ligand>
</feature>
<feature type="binding site" evidence="1">
    <location>
        <position position="139"/>
    </location>
    <ligand>
        <name>sn-glycerol 3-phosphate</name>
        <dbReference type="ChEBI" id="CHEBI:57597"/>
    </ligand>
</feature>
<feature type="binding site" evidence="1">
    <location>
        <position position="141"/>
    </location>
    <ligand>
        <name>NADPH</name>
        <dbReference type="ChEBI" id="CHEBI:57783"/>
    </ligand>
</feature>
<feature type="binding site" evidence="1">
    <location>
        <position position="192"/>
    </location>
    <ligand>
        <name>sn-glycerol 3-phosphate</name>
        <dbReference type="ChEBI" id="CHEBI:57597"/>
    </ligand>
</feature>
<feature type="binding site" evidence="1">
    <location>
        <position position="245"/>
    </location>
    <ligand>
        <name>sn-glycerol 3-phosphate</name>
        <dbReference type="ChEBI" id="CHEBI:57597"/>
    </ligand>
</feature>
<feature type="binding site" evidence="1">
    <location>
        <position position="255"/>
    </location>
    <ligand>
        <name>sn-glycerol 3-phosphate</name>
        <dbReference type="ChEBI" id="CHEBI:57597"/>
    </ligand>
</feature>
<feature type="binding site" evidence="1">
    <location>
        <position position="256"/>
    </location>
    <ligand>
        <name>NADPH</name>
        <dbReference type="ChEBI" id="CHEBI:57783"/>
    </ligand>
</feature>
<feature type="binding site" evidence="1">
    <location>
        <position position="256"/>
    </location>
    <ligand>
        <name>sn-glycerol 3-phosphate</name>
        <dbReference type="ChEBI" id="CHEBI:57597"/>
    </ligand>
</feature>
<feature type="binding site" evidence="1">
    <location>
        <position position="257"/>
    </location>
    <ligand>
        <name>sn-glycerol 3-phosphate</name>
        <dbReference type="ChEBI" id="CHEBI:57597"/>
    </ligand>
</feature>
<feature type="binding site" evidence="1">
    <location>
        <position position="282"/>
    </location>
    <ligand>
        <name>NADPH</name>
        <dbReference type="ChEBI" id="CHEBI:57783"/>
    </ligand>
</feature>
<sequence length="332" mass="36128">MEPFKHPIAILGAGSWGTALALVLARKGQKVRLWSYESDHVDEMQAEGVNNRYLPNYPFPETLKAYCDLKASLEGVTDILIVVPSFAFHEVITRMKPLIDAKTRIAWGTKGLAKGSRLLHEVVATELGQVPMAVISGPSLATEVAANLPTAVSLTSNNSQFSKDLIERLHGQRFRVYKNDDMIGVELCGSVKNILAIATGISDGLKLGSNARAALITRGLTEMGRLVSVFGGKQETLTGLAGLGDLVLTCTDNQSRNRRFGLALGEGVDKKEAQQTIGQAIEGLYNTDQVHALAQKHAIEMPLTFQVHRILHEDLDPQQAVQELLERSPKAE</sequence>
<dbReference type="EC" id="1.1.1.94" evidence="1"/>
<dbReference type="EMBL" id="CP001020">
    <property type="protein sequence ID" value="ACJ20878.1"/>
    <property type="molecule type" value="Genomic_DNA"/>
</dbReference>
<dbReference type="RefSeq" id="WP_005772049.1">
    <property type="nucleotide sequence ID" value="NC_011528.1"/>
</dbReference>
<dbReference type="SMR" id="B6J4L3"/>
<dbReference type="KEGG" id="cbc:CbuK_1746"/>
<dbReference type="HOGENOM" id="CLU_033449_0_2_6"/>
<dbReference type="UniPathway" id="UPA00940"/>
<dbReference type="GO" id="GO:0005829">
    <property type="term" value="C:cytosol"/>
    <property type="evidence" value="ECO:0007669"/>
    <property type="project" value="TreeGrafter"/>
</dbReference>
<dbReference type="GO" id="GO:0047952">
    <property type="term" value="F:glycerol-3-phosphate dehydrogenase [NAD(P)+] activity"/>
    <property type="evidence" value="ECO:0007669"/>
    <property type="project" value="UniProtKB-UniRule"/>
</dbReference>
<dbReference type="GO" id="GO:0051287">
    <property type="term" value="F:NAD binding"/>
    <property type="evidence" value="ECO:0007669"/>
    <property type="project" value="InterPro"/>
</dbReference>
<dbReference type="GO" id="GO:0005975">
    <property type="term" value="P:carbohydrate metabolic process"/>
    <property type="evidence" value="ECO:0007669"/>
    <property type="project" value="InterPro"/>
</dbReference>
<dbReference type="GO" id="GO:0046167">
    <property type="term" value="P:glycerol-3-phosphate biosynthetic process"/>
    <property type="evidence" value="ECO:0007669"/>
    <property type="project" value="UniProtKB-UniRule"/>
</dbReference>
<dbReference type="GO" id="GO:0046168">
    <property type="term" value="P:glycerol-3-phosphate catabolic process"/>
    <property type="evidence" value="ECO:0007669"/>
    <property type="project" value="InterPro"/>
</dbReference>
<dbReference type="GO" id="GO:0046474">
    <property type="term" value="P:glycerophospholipid biosynthetic process"/>
    <property type="evidence" value="ECO:0007669"/>
    <property type="project" value="TreeGrafter"/>
</dbReference>
<dbReference type="FunFam" id="1.10.1040.10:FF:000001">
    <property type="entry name" value="Glycerol-3-phosphate dehydrogenase [NAD(P)+]"/>
    <property type="match status" value="1"/>
</dbReference>
<dbReference type="FunFam" id="3.40.50.720:FF:000019">
    <property type="entry name" value="Glycerol-3-phosphate dehydrogenase [NAD(P)+]"/>
    <property type="match status" value="1"/>
</dbReference>
<dbReference type="Gene3D" id="1.10.1040.10">
    <property type="entry name" value="N-(1-d-carboxylethyl)-l-norvaline Dehydrogenase, domain 2"/>
    <property type="match status" value="1"/>
</dbReference>
<dbReference type="Gene3D" id="3.40.50.720">
    <property type="entry name" value="NAD(P)-binding Rossmann-like Domain"/>
    <property type="match status" value="1"/>
</dbReference>
<dbReference type="HAMAP" id="MF_00394">
    <property type="entry name" value="NAD_Glyc3P_dehydrog"/>
    <property type="match status" value="1"/>
</dbReference>
<dbReference type="InterPro" id="IPR008927">
    <property type="entry name" value="6-PGluconate_DH-like_C_sf"/>
</dbReference>
<dbReference type="InterPro" id="IPR013328">
    <property type="entry name" value="6PGD_dom2"/>
</dbReference>
<dbReference type="InterPro" id="IPR006168">
    <property type="entry name" value="G3P_DH_NAD-dep"/>
</dbReference>
<dbReference type="InterPro" id="IPR006109">
    <property type="entry name" value="G3P_DH_NAD-dep_C"/>
</dbReference>
<dbReference type="InterPro" id="IPR011128">
    <property type="entry name" value="G3P_DH_NAD-dep_N"/>
</dbReference>
<dbReference type="InterPro" id="IPR036291">
    <property type="entry name" value="NAD(P)-bd_dom_sf"/>
</dbReference>
<dbReference type="NCBIfam" id="NF000940">
    <property type="entry name" value="PRK00094.1-2"/>
    <property type="match status" value="1"/>
</dbReference>
<dbReference type="NCBIfam" id="NF000942">
    <property type="entry name" value="PRK00094.1-4"/>
    <property type="match status" value="1"/>
</dbReference>
<dbReference type="PANTHER" id="PTHR11728">
    <property type="entry name" value="GLYCEROL-3-PHOSPHATE DEHYDROGENASE"/>
    <property type="match status" value="1"/>
</dbReference>
<dbReference type="PANTHER" id="PTHR11728:SF1">
    <property type="entry name" value="GLYCEROL-3-PHOSPHATE DEHYDROGENASE [NAD(+)] 2, CHLOROPLASTIC"/>
    <property type="match status" value="1"/>
</dbReference>
<dbReference type="Pfam" id="PF07479">
    <property type="entry name" value="NAD_Gly3P_dh_C"/>
    <property type="match status" value="1"/>
</dbReference>
<dbReference type="Pfam" id="PF01210">
    <property type="entry name" value="NAD_Gly3P_dh_N"/>
    <property type="match status" value="1"/>
</dbReference>
<dbReference type="PIRSF" id="PIRSF000114">
    <property type="entry name" value="Glycerol-3-P_dh"/>
    <property type="match status" value="1"/>
</dbReference>
<dbReference type="PRINTS" id="PR00077">
    <property type="entry name" value="GPDHDRGNASE"/>
</dbReference>
<dbReference type="SUPFAM" id="SSF48179">
    <property type="entry name" value="6-phosphogluconate dehydrogenase C-terminal domain-like"/>
    <property type="match status" value="1"/>
</dbReference>
<dbReference type="SUPFAM" id="SSF51735">
    <property type="entry name" value="NAD(P)-binding Rossmann-fold domains"/>
    <property type="match status" value="1"/>
</dbReference>
<dbReference type="PROSITE" id="PS00957">
    <property type="entry name" value="NAD_G3PDH"/>
    <property type="match status" value="1"/>
</dbReference>
<proteinExistence type="inferred from homology"/>
<evidence type="ECO:0000255" key="1">
    <source>
        <dbReference type="HAMAP-Rule" id="MF_00394"/>
    </source>
</evidence>
<organism>
    <name type="scientific">Coxiella burnetii (strain CbuK_Q154)</name>
    <name type="common">Coxiella burnetii (strain Q154)</name>
    <dbReference type="NCBI Taxonomy" id="434924"/>
    <lineage>
        <taxon>Bacteria</taxon>
        <taxon>Pseudomonadati</taxon>
        <taxon>Pseudomonadota</taxon>
        <taxon>Gammaproteobacteria</taxon>
        <taxon>Legionellales</taxon>
        <taxon>Coxiellaceae</taxon>
        <taxon>Coxiella</taxon>
    </lineage>
</organism>
<comment type="function">
    <text evidence="1">Catalyzes the reduction of the glycolytic intermediate dihydroxyacetone phosphate (DHAP) to sn-glycerol 3-phosphate (G3P), the key precursor for phospholipid synthesis.</text>
</comment>
<comment type="catalytic activity">
    <reaction evidence="1">
        <text>sn-glycerol 3-phosphate + NAD(+) = dihydroxyacetone phosphate + NADH + H(+)</text>
        <dbReference type="Rhea" id="RHEA:11092"/>
        <dbReference type="ChEBI" id="CHEBI:15378"/>
        <dbReference type="ChEBI" id="CHEBI:57540"/>
        <dbReference type="ChEBI" id="CHEBI:57597"/>
        <dbReference type="ChEBI" id="CHEBI:57642"/>
        <dbReference type="ChEBI" id="CHEBI:57945"/>
        <dbReference type="EC" id="1.1.1.94"/>
    </reaction>
    <physiologicalReaction direction="right-to-left" evidence="1">
        <dbReference type="Rhea" id="RHEA:11094"/>
    </physiologicalReaction>
</comment>
<comment type="catalytic activity">
    <reaction evidence="1">
        <text>sn-glycerol 3-phosphate + NADP(+) = dihydroxyacetone phosphate + NADPH + H(+)</text>
        <dbReference type="Rhea" id="RHEA:11096"/>
        <dbReference type="ChEBI" id="CHEBI:15378"/>
        <dbReference type="ChEBI" id="CHEBI:57597"/>
        <dbReference type="ChEBI" id="CHEBI:57642"/>
        <dbReference type="ChEBI" id="CHEBI:57783"/>
        <dbReference type="ChEBI" id="CHEBI:58349"/>
        <dbReference type="EC" id="1.1.1.94"/>
    </reaction>
    <physiologicalReaction direction="right-to-left" evidence="1">
        <dbReference type="Rhea" id="RHEA:11098"/>
    </physiologicalReaction>
</comment>
<comment type="pathway">
    <text evidence="1">Membrane lipid metabolism; glycerophospholipid metabolism.</text>
</comment>
<comment type="subcellular location">
    <subcellularLocation>
        <location evidence="1">Cytoplasm</location>
    </subcellularLocation>
</comment>
<comment type="similarity">
    <text evidence="1">Belongs to the NAD-dependent glycerol-3-phosphate dehydrogenase family.</text>
</comment>
<keyword id="KW-0963">Cytoplasm</keyword>
<keyword id="KW-0444">Lipid biosynthesis</keyword>
<keyword id="KW-0443">Lipid metabolism</keyword>
<keyword id="KW-0520">NAD</keyword>
<keyword id="KW-0521">NADP</keyword>
<keyword id="KW-0547">Nucleotide-binding</keyword>
<keyword id="KW-0560">Oxidoreductase</keyword>
<keyword id="KW-0594">Phospholipid biosynthesis</keyword>
<keyword id="KW-1208">Phospholipid metabolism</keyword>
<reference key="1">
    <citation type="journal article" date="2009" name="Infect. Immun.">
        <title>Comparative genomics reveal extensive transposon-mediated genomic plasticity and diversity among potential effector proteins within the genus Coxiella.</title>
        <authorList>
            <person name="Beare P.A."/>
            <person name="Unsworth N."/>
            <person name="Andoh M."/>
            <person name="Voth D.E."/>
            <person name="Omsland A."/>
            <person name="Gilk S.D."/>
            <person name="Williams K.P."/>
            <person name="Sobral B.W."/>
            <person name="Kupko J.J. III"/>
            <person name="Porcella S.F."/>
            <person name="Samuel J.E."/>
            <person name="Heinzen R.A."/>
        </authorList>
    </citation>
    <scope>NUCLEOTIDE SEQUENCE [LARGE SCALE GENOMIC DNA]</scope>
    <source>
        <strain>CbuK_Q154</strain>
    </source>
</reference>
<gene>
    <name evidence="1" type="primary">gpsA</name>
    <name type="ordered locus">CbuK_1746</name>
</gene>
<protein>
    <recommendedName>
        <fullName evidence="1">Glycerol-3-phosphate dehydrogenase [NAD(P)+]</fullName>
        <ecNumber evidence="1">1.1.1.94</ecNumber>
    </recommendedName>
    <alternativeName>
        <fullName evidence="1">NAD(P)(+)-dependent glycerol-3-phosphate dehydrogenase</fullName>
    </alternativeName>
    <alternativeName>
        <fullName evidence="1">NAD(P)H-dependent dihydroxyacetone-phosphate reductase</fullName>
    </alternativeName>
</protein>
<name>GPDA_COXB1</name>
<accession>B6J4L3</accession>